<comment type="function">
    <text evidence="4 6 11">Probably acts as a transcriptional activator. May bind to the minimal GLI-consensus sequence 5'-GGGTGGTC-3'. Can determine the ectodermal cell fate and promote the earliest step of neural and neural crest development. Involved in establishing left-right asymmetry in the embryo.</text>
</comment>
<comment type="subcellular location">
    <subcellularLocation>
        <location>Nucleus</location>
    </subcellularLocation>
    <subcellularLocation>
        <location evidence="1">Cytoplasm</location>
    </subcellularLocation>
</comment>
<comment type="tissue specificity">
    <text evidence="4 10 11">First detected at early gastrula (stage 10.25) in the dorsal lip and prospective neural plate. Also expressed in the mesoderm at early gastrulation, with expression strongest on the dorsal side. Mesodermal expression continues at stage 12 but is hardly detectable after stage 14. As gastrulation proceeds, expression decreases in the dorsal lip and increases in the prospective neural plate. At the neural plate stage (stage 14), expressed strongly in the prospective mesencephalon and anterior rhombencephalon, after which expression becomes stronger in the anterior neural folds. At early tailbud stage (stage 20), expression becomes restricted to the dorsal region of forebrain, midbrain and hindbrain, and weakly to the dorsal trunk. After mid-tailbud stage, expression decreases in the diencephalon, appears in the lateral mesoderm of the tailbud region and becomes restricted in the dorsal part of the neural tube.</text>
</comment>
<comment type="developmental stage">
    <text evidence="10 11 12">Expressed zygotically. First expressed from the late blastula.</text>
</comment>
<comment type="induction">
    <text evidence="4 5 6 7 8 9 11">By dvr1/vg1, activin and t/bra in the mesoderm. By heteromeric AP-1 (fos/jun) during activin signaling. By increases in Ca(2+) in the dorsal ectoderm, triggered by planar signals from the mesoderm. Suppressed by bmp-signaling. By pbx1 and meis1. By zic1, zic2 and zic3 but not zic5.</text>
</comment>
<comment type="domain">
    <text evidence="1 4">The C2H2-type 3, 4 and 5 zinc finger domains are necessary for transcription activation (By similarity). The zinc fingers and the N-terminus are independently important for establishing the L/R axis.</text>
</comment>
<comment type="similarity">
    <text evidence="13">Belongs to the GLI C2H2-type zinc-finger protein family.</text>
</comment>
<comment type="sequence caution" evidence="13">
    <conflict type="erroneous initiation">
        <sequence resource="EMBL-CDS" id="AAH57699"/>
    </conflict>
    <text>Truncated N-terminus.</text>
</comment>
<gene>
    <name type="primary">zic3</name>
    <name type="synonym">zic3-a</name>
</gene>
<organism>
    <name type="scientific">Xenopus laevis</name>
    <name type="common">African clawed frog</name>
    <dbReference type="NCBI Taxonomy" id="8355"/>
    <lineage>
        <taxon>Eukaryota</taxon>
        <taxon>Metazoa</taxon>
        <taxon>Chordata</taxon>
        <taxon>Craniata</taxon>
        <taxon>Vertebrata</taxon>
        <taxon>Euteleostomi</taxon>
        <taxon>Amphibia</taxon>
        <taxon>Batrachia</taxon>
        <taxon>Anura</taxon>
        <taxon>Pipoidea</taxon>
        <taxon>Pipidae</taxon>
        <taxon>Xenopodinae</taxon>
        <taxon>Xenopus</taxon>
        <taxon>Xenopus</taxon>
    </lineage>
</organism>
<proteinExistence type="evidence at transcript level"/>
<protein>
    <recommendedName>
        <fullName>Zinc finger protein ZIC 3</fullName>
        <shortName>XZic3</shortName>
        <shortName>XlZic3</shortName>
    </recommendedName>
    <alternativeName>
        <fullName>Zinc finger protein Zic3-A</fullName>
    </alternativeName>
    <alternativeName>
        <fullName>Zinc finger protein of the cerebellum 3</fullName>
    </alternativeName>
</protein>
<evidence type="ECO:0000250" key="1"/>
<evidence type="ECO:0000255" key="2">
    <source>
        <dbReference type="PROSITE-ProRule" id="PRU00042"/>
    </source>
</evidence>
<evidence type="ECO:0000256" key="3">
    <source>
        <dbReference type="SAM" id="MobiDB-lite"/>
    </source>
</evidence>
<evidence type="ECO:0000269" key="4">
    <source>
    </source>
</evidence>
<evidence type="ECO:0000269" key="5">
    <source>
    </source>
</evidence>
<evidence type="ECO:0000269" key="6">
    <source>
    </source>
</evidence>
<evidence type="ECO:0000269" key="7">
    <source>
    </source>
</evidence>
<evidence type="ECO:0000269" key="8">
    <source>
    </source>
</evidence>
<evidence type="ECO:0000269" key="9">
    <source>
    </source>
</evidence>
<evidence type="ECO:0000269" key="10">
    <source>
    </source>
</evidence>
<evidence type="ECO:0000269" key="11">
    <source>
    </source>
</evidence>
<evidence type="ECO:0000269" key="12">
    <source>
    </source>
</evidence>
<evidence type="ECO:0000305" key="13"/>
<dbReference type="EMBL" id="AB005292">
    <property type="protein sequence ID" value="BAA23874.2"/>
    <property type="molecule type" value="mRNA"/>
</dbReference>
<dbReference type="EMBL" id="BC057699">
    <property type="protein sequence ID" value="AAH57699.2"/>
    <property type="status" value="ALT_INIT"/>
    <property type="molecule type" value="mRNA"/>
</dbReference>
<dbReference type="EMBL" id="BC082617">
    <property type="protein sequence ID" value="AAH82617.1"/>
    <property type="molecule type" value="mRNA"/>
</dbReference>
<dbReference type="EMBL" id="AF179297">
    <property type="protein sequence ID" value="AAG09377.1"/>
    <property type="molecule type" value="Genomic_DNA"/>
</dbReference>
<dbReference type="EMBL" id="AF506277">
    <property type="protein sequence ID" value="AAP20808.1"/>
    <property type="molecule type" value="Genomic_DNA"/>
</dbReference>
<dbReference type="EMBL" id="AF506278">
    <property type="protein sequence ID" value="AAP20809.1"/>
    <property type="molecule type" value="Genomic_DNA"/>
</dbReference>
<dbReference type="RefSeq" id="NP_001081088.1">
    <property type="nucleotide sequence ID" value="NM_001087619.1"/>
</dbReference>
<dbReference type="SMR" id="O57311"/>
<dbReference type="DNASU" id="394375"/>
<dbReference type="GeneID" id="394375"/>
<dbReference type="KEGG" id="xla:394375"/>
<dbReference type="CTD" id="394375"/>
<dbReference type="OMA" id="CERTFGS"/>
<dbReference type="OrthoDB" id="3214149at2759"/>
<dbReference type="Proteomes" id="UP000186698">
    <property type="component" value="Chromosome 8S"/>
</dbReference>
<dbReference type="Bgee" id="394375">
    <property type="expression patterns" value="Expressed in gastrula and 4 other cell types or tissues"/>
</dbReference>
<dbReference type="GO" id="GO:0005737">
    <property type="term" value="C:cytoplasm"/>
    <property type="evidence" value="ECO:0000250"/>
    <property type="project" value="UniProtKB"/>
</dbReference>
<dbReference type="GO" id="GO:0005634">
    <property type="term" value="C:nucleus"/>
    <property type="evidence" value="ECO:0000250"/>
    <property type="project" value="UniProtKB"/>
</dbReference>
<dbReference type="GO" id="GO:0003700">
    <property type="term" value="F:DNA-binding transcription factor activity"/>
    <property type="evidence" value="ECO:0000250"/>
    <property type="project" value="UniProtKB"/>
</dbReference>
<dbReference type="GO" id="GO:0000981">
    <property type="term" value="F:DNA-binding transcription factor activity, RNA polymerase II-specific"/>
    <property type="evidence" value="ECO:0000318"/>
    <property type="project" value="GO_Central"/>
</dbReference>
<dbReference type="GO" id="GO:0000978">
    <property type="term" value="F:RNA polymerase II cis-regulatory region sequence-specific DNA binding"/>
    <property type="evidence" value="ECO:0000318"/>
    <property type="project" value="GO_Central"/>
</dbReference>
<dbReference type="GO" id="GO:0043565">
    <property type="term" value="F:sequence-specific DNA binding"/>
    <property type="evidence" value="ECO:0000250"/>
    <property type="project" value="UniProtKB"/>
</dbReference>
<dbReference type="GO" id="GO:0008270">
    <property type="term" value="F:zinc ion binding"/>
    <property type="evidence" value="ECO:0007669"/>
    <property type="project" value="UniProtKB-KW"/>
</dbReference>
<dbReference type="GO" id="GO:0007417">
    <property type="term" value="P:central nervous system development"/>
    <property type="evidence" value="ECO:0000318"/>
    <property type="project" value="GO_Central"/>
</dbReference>
<dbReference type="GO" id="GO:0007368">
    <property type="term" value="P:determination of left/right symmetry"/>
    <property type="evidence" value="ECO:0000315"/>
    <property type="project" value="UniProtKB"/>
</dbReference>
<dbReference type="GO" id="GO:0000578">
    <property type="term" value="P:embryonic axis specification"/>
    <property type="evidence" value="ECO:0000315"/>
    <property type="project" value="UniProtKB"/>
</dbReference>
<dbReference type="GO" id="GO:0014034">
    <property type="term" value="P:neural crest cell fate commitment"/>
    <property type="evidence" value="ECO:0000315"/>
    <property type="project" value="UniProtKB"/>
</dbReference>
<dbReference type="GO" id="GO:0045893">
    <property type="term" value="P:positive regulation of DNA-templated transcription"/>
    <property type="evidence" value="ECO:0000250"/>
    <property type="project" value="UniProtKB"/>
</dbReference>
<dbReference type="GO" id="GO:0045944">
    <property type="term" value="P:positive regulation of transcription by RNA polymerase II"/>
    <property type="evidence" value="ECO:0000250"/>
    <property type="project" value="UniProtKB"/>
</dbReference>
<dbReference type="GO" id="GO:0006357">
    <property type="term" value="P:regulation of transcription by RNA polymerase II"/>
    <property type="evidence" value="ECO:0000318"/>
    <property type="project" value="GO_Central"/>
</dbReference>
<dbReference type="FunFam" id="3.30.160.60:FF:000035">
    <property type="entry name" value="Zinc finger protein ZIC 1"/>
    <property type="match status" value="1"/>
</dbReference>
<dbReference type="FunFam" id="3.30.160.60:FF:000039">
    <property type="entry name" value="Zinc finger protein ZIC 1"/>
    <property type="match status" value="1"/>
</dbReference>
<dbReference type="FunFam" id="3.30.160.60:FF:000041">
    <property type="entry name" value="Zinc finger protein ZIC 1"/>
    <property type="match status" value="1"/>
</dbReference>
<dbReference type="FunFam" id="3.30.160.60:FF:001330">
    <property type="entry name" value="Zinc finger protein ZIC 4"/>
    <property type="match status" value="1"/>
</dbReference>
<dbReference type="Gene3D" id="3.30.160.60">
    <property type="entry name" value="Classic Zinc Finger"/>
    <property type="match status" value="4"/>
</dbReference>
<dbReference type="InterPro" id="IPR043359">
    <property type="entry name" value="GLI-like"/>
</dbReference>
<dbReference type="InterPro" id="IPR056436">
    <property type="entry name" value="Znf-C2H2_ZIC1-5/GLI1-3-like"/>
</dbReference>
<dbReference type="InterPro" id="IPR036236">
    <property type="entry name" value="Znf_C2H2_sf"/>
</dbReference>
<dbReference type="InterPro" id="IPR013087">
    <property type="entry name" value="Znf_C2H2_type"/>
</dbReference>
<dbReference type="InterPro" id="IPR041643">
    <property type="entry name" value="Znf_ZIC"/>
</dbReference>
<dbReference type="PANTHER" id="PTHR45718">
    <property type="entry name" value="TRANSCRIPTIONAL ACTIVATOR CUBITUS INTERRUPTUS"/>
    <property type="match status" value="1"/>
</dbReference>
<dbReference type="PANTHER" id="PTHR45718:SF4">
    <property type="entry name" value="TRANSCRIPTIONAL ACTIVATOR CUBITUS INTERRUPTUS"/>
    <property type="match status" value="1"/>
</dbReference>
<dbReference type="Pfam" id="PF00096">
    <property type="entry name" value="zf-C2H2"/>
    <property type="match status" value="3"/>
</dbReference>
<dbReference type="Pfam" id="PF23561">
    <property type="entry name" value="zf-C2H2_15"/>
    <property type="match status" value="1"/>
</dbReference>
<dbReference type="Pfam" id="PF18366">
    <property type="entry name" value="zf_ZIC"/>
    <property type="match status" value="1"/>
</dbReference>
<dbReference type="SMART" id="SM00355">
    <property type="entry name" value="ZnF_C2H2"/>
    <property type="match status" value="5"/>
</dbReference>
<dbReference type="SUPFAM" id="SSF57667">
    <property type="entry name" value="beta-beta-alpha zinc fingers"/>
    <property type="match status" value="2"/>
</dbReference>
<dbReference type="PROSITE" id="PS00028">
    <property type="entry name" value="ZINC_FINGER_C2H2_1"/>
    <property type="match status" value="3"/>
</dbReference>
<dbReference type="PROSITE" id="PS50157">
    <property type="entry name" value="ZINC_FINGER_C2H2_2"/>
    <property type="match status" value="4"/>
</dbReference>
<reference key="1">
    <citation type="journal article" date="1997" name="Proc. Natl. Acad. Sci. U.S.A.">
        <title>Xenopus Zic3, a primary regulator both in neural and neural crest development.</title>
        <authorList>
            <person name="Nakata K."/>
            <person name="Nagai T."/>
            <person name="Aruga J."/>
            <person name="Mikoshiba K."/>
        </authorList>
    </citation>
    <scope>NUCLEOTIDE SEQUENCE [MRNA]</scope>
    <scope>FUNCTION</scope>
    <scope>TISSUE SPECIFICITY</scope>
    <scope>DEVELOPMENTAL STAGE</scope>
    <scope>INDUCTION</scope>
    <source>
        <tissue>Neurula</tissue>
    </source>
</reference>
<reference key="2">
    <citation type="submission" date="1999-11" db="EMBL/GenBank/DDBJ databases">
        <authorList>
            <person name="Nakata K."/>
            <person name="Nagai T."/>
            <person name="Aruga J."/>
            <person name="Mikoshiba K."/>
        </authorList>
    </citation>
    <scope>SEQUENCE REVISION TO 17</scope>
</reference>
<reference key="3">
    <citation type="submission" date="2004-09" db="EMBL/GenBank/DDBJ databases">
        <authorList>
            <consortium name="NIH - Xenopus Gene Collection (XGC) project"/>
        </authorList>
    </citation>
    <scope>NUCLEOTIDE SEQUENCE [LARGE SCALE MRNA]</scope>
    <source>
        <tissue>Gastrula</tissue>
    </source>
</reference>
<reference key="4">
    <citation type="journal article" date="2004" name="Exp. Mol. Med.">
        <title>Transcriptional regulation of Zic3 by heterodimeric AP-1(c-Jun/c-Fos) during Xenopus development.</title>
        <authorList>
            <person name="Lee S.Y."/>
            <person name="Lee H.-S."/>
            <person name="Moon J.-S."/>
            <person name="Kim J.-I."/>
            <person name="Park J.-B."/>
            <person name="Lee J.-Y."/>
            <person name="Park M.J."/>
            <person name="Kim J."/>
        </authorList>
    </citation>
    <scope>NUCLEOTIDE SEQUENCE [GENOMIC DNA] OF 1-33</scope>
    <scope>INDUCTION</scope>
</reference>
<reference key="5">
    <citation type="journal article" date="2003" name="Mech. Dev.">
        <title>Identification of a phylogenetically conserved activin-responsive enhancer in the Zic3 gene.</title>
        <authorList>
            <person name="Weber J.R."/>
            <person name="Sokol S.Y."/>
        </authorList>
    </citation>
    <scope>NUCLEOTIDE SEQUENCE [GENOMIC DNA] OF 319-331 AND 374-386</scope>
</reference>
<reference key="6">
    <citation type="journal article" date="1998" name="Mech. Dev.">
        <title>Xenopus Zic family and its role in neural and neural crest development.</title>
        <authorList>
            <person name="Nakata K."/>
            <person name="Nagai T."/>
            <person name="Aruga J."/>
            <person name="Mikoshiba K."/>
        </authorList>
    </citation>
    <scope>DEVELOPMENTAL STAGE</scope>
</reference>
<reference key="7">
    <citation type="journal article" date="2000" name="Development">
        <title>Zic3 is involved in the left-right specification of the Xenopus embryo.</title>
        <authorList>
            <person name="Kitaguchi T."/>
            <person name="Nagai T."/>
            <person name="Nakata K."/>
            <person name="Aruga J."/>
            <person name="Mikoshiba K."/>
        </authorList>
    </citation>
    <scope>FUNCTION</scope>
    <scope>TISSUE SPECIFICITY</scope>
    <scope>DOMAIN</scope>
    <scope>INDUCTION</scope>
</reference>
<reference key="8">
    <citation type="journal article" date="2000" name="Mech. Dev.">
        <title>A novel member of the Xenopus Zic family, Zic5, mediates neural crest development.</title>
        <authorList>
            <person name="Nakata K."/>
            <person name="Koyabu Y."/>
            <person name="Aruga J."/>
            <person name="Mikoshiba K."/>
        </authorList>
    </citation>
    <scope>INDUCTION</scope>
</reference>
<reference key="9">
    <citation type="journal article" date="2002" name="Dev. Growth Differ.">
        <title>Xenopus Brachyury regulates mesodermal expression of Zic3, a gene controlling left-right asymmetry.</title>
        <authorList>
            <person name="Kitaguchi T."/>
            <person name="Mizugishi K."/>
            <person name="Hatayama M."/>
            <person name="Aruga J."/>
            <person name="Mikoshiba K."/>
        </authorList>
    </citation>
    <scope>FUNCTION</scope>
    <scope>INDUCTION</scope>
</reference>
<reference key="10">
    <citation type="journal article" date="2003" name="Dev. Biol.">
        <title>Calcium transients triggered by planar signals induce the expression of ZIC3 gene during neural induction in Xenopus.</title>
        <authorList>
            <person name="Leclerc C."/>
            <person name="Lee M."/>
            <person name="Webb S.E."/>
            <person name="Moreau M."/>
            <person name="Miller A.L."/>
        </authorList>
    </citation>
    <scope>INDUCTION</scope>
</reference>
<reference key="11">
    <citation type="journal article" date="2006" name="Biochem. Biophys. Res. Commun.">
        <title>Pbx1 and Meis1 regulate activity of the Xenopus laevis Zic3 promoter through a highly conserved region.</title>
        <authorList>
            <person name="Kelly L.E."/>
            <person name="Carrel T.L."/>
            <person name="Herman G.E."/>
            <person name="El-Hodiri H.M."/>
        </authorList>
    </citation>
    <scope>INDUCTION</scope>
</reference>
<reference key="12">
    <citation type="journal article" date="2006" name="Dev. Dyn.">
        <title>Xenopus Zic4: conservation and diversification of expression profiles and protein function among the Xenopus Zic family.</title>
        <authorList>
            <person name="Fujimi T.J."/>
            <person name="Mikoshiba K."/>
            <person name="Aruga J."/>
        </authorList>
    </citation>
    <scope>TISSUE SPECIFICITY</scope>
    <scope>DEVELOPMENTAL STAGE</scope>
</reference>
<accession>O57311</accession>
<accession>Q640K7</accession>
<accession>Q6PF77</accession>
<accession>Q7ZZN6</accession>
<accession>Q7ZZN7</accession>
<accession>Q9DG65</accession>
<keyword id="KW-0010">Activator</keyword>
<keyword id="KW-0963">Cytoplasm</keyword>
<keyword id="KW-0217">Developmental protein</keyword>
<keyword id="KW-0221">Differentiation</keyword>
<keyword id="KW-0238">DNA-binding</keyword>
<keyword id="KW-0479">Metal-binding</keyword>
<keyword id="KW-0524">Neurogenesis</keyword>
<keyword id="KW-0539">Nucleus</keyword>
<keyword id="KW-1185">Reference proteome</keyword>
<keyword id="KW-0677">Repeat</keyword>
<keyword id="KW-0804">Transcription</keyword>
<keyword id="KW-0805">Transcription regulation</keyword>
<keyword id="KW-0862">Zinc</keyword>
<keyword id="KW-0863">Zinc-finger</keyword>
<name>ZIC3_XENLA</name>
<feature type="chain" id="PRO_0000047252" description="Zinc finger protein ZIC 3">
    <location>
        <begin position="1"/>
        <end position="441"/>
    </location>
</feature>
<feature type="zinc finger region" description="C2H2-type 1; atypical" evidence="2">
    <location>
        <begin position="222"/>
        <end position="257"/>
    </location>
</feature>
<feature type="zinc finger region" description="C2H2-type 2; atypical" evidence="2">
    <location>
        <begin position="266"/>
        <end position="293"/>
    </location>
</feature>
<feature type="zinc finger region" description="C2H2-type 3" evidence="2">
    <location>
        <begin position="299"/>
        <end position="323"/>
    </location>
</feature>
<feature type="zinc finger region" description="C2H2-type 4" evidence="2">
    <location>
        <begin position="329"/>
        <end position="353"/>
    </location>
</feature>
<feature type="zinc finger region" description="C2H2-type 5" evidence="2">
    <location>
        <begin position="359"/>
        <end position="381"/>
    </location>
</feature>
<feature type="region of interest" description="Disordered" evidence="3">
    <location>
        <begin position="375"/>
        <end position="441"/>
    </location>
</feature>
<feature type="compositionally biased region" description="Low complexity" evidence="3">
    <location>
        <begin position="383"/>
        <end position="399"/>
    </location>
</feature>
<feature type="compositionally biased region" description="Polar residues" evidence="3">
    <location>
        <begin position="406"/>
        <end position="429"/>
    </location>
</feature>
<feature type="sequence conflict" description="In Ref. 4; AAG09377." evidence="13" ref="4">
    <original>G</original>
    <variation>R</variation>
    <location>
        <position position="17"/>
    </location>
</feature>
<feature type="sequence conflict" description="In Ref. 1; BAA23874." evidence="13" ref="1">
    <original>S</original>
    <variation>N</variation>
    <location>
        <position position="74"/>
    </location>
</feature>
<feature type="sequence conflict" description="In Ref. 1; BAA23874." evidence="13" ref="1">
    <original>Q</original>
    <variation>P</variation>
    <location>
        <position position="207"/>
    </location>
</feature>
<sequence>MTMLLDGGPQFPTLGVGGFGTARHHEMSNRDAGMGLNPFTEPSHAAAFKLSPASHDLSSSQSSAFTPQASGYASSLGHHAGQVPSYGGAAFNSTRDFLFRNRNSGIADSSSAGSQHGLFANHGPPGIGEPPGHLIFPGLHEQSSSHTSSNGHVVNGQMHLGLRGDIFGRPDPYRAVPSPRTDHYAAAQFHNYNHMNMSMNVAAHHGQGAFFRYMRQPIKQELSCKWLEESTMNHPQKTCDRTFSSMHELVTHMTMEHVGGPEQNNHICYWEECPRGGKSFKAKYKLVNHIRVHTGEKPFPCPFPGCGKIFARSENLKIHKRTHTGEKPFKCEFEGCDRRFANSSDRKKHMHVHTSDKPYICKVCDKSYTHPSSLRKHMKVHESQGSDSSPAASSGYESATPPAMVSANSEEPSKNSSATHQTNNNSHNTGLLPPNFNEWYV</sequence>